<protein>
    <recommendedName>
        <fullName>Short-chain dehydrogenase/reductase family 16C member 6</fullName>
        <ecNumber>1.1.1.-</ecNumber>
    </recommendedName>
</protein>
<accession>A5PJJ7</accession>
<keyword id="KW-0520">NAD</keyword>
<keyword id="KW-0521">NADP</keyword>
<keyword id="KW-0560">Oxidoreductase</keyword>
<keyword id="KW-1185">Reference proteome</keyword>
<comment type="similarity">
    <text evidence="4">Belongs to the short-chain dehydrogenases/reductases (SDR) family.</text>
</comment>
<dbReference type="EC" id="1.1.1.-"/>
<dbReference type="EMBL" id="BC142138">
    <property type="protein sequence ID" value="AAI42139.1"/>
    <property type="molecule type" value="mRNA"/>
</dbReference>
<dbReference type="RefSeq" id="NP_001093177.1">
    <property type="nucleotide sequence ID" value="NM_001099707.1"/>
</dbReference>
<dbReference type="SMR" id="A5PJJ7"/>
<dbReference type="FunCoup" id="A5PJJ7">
    <property type="interactions" value="67"/>
</dbReference>
<dbReference type="STRING" id="9913.ENSBTAP00000048107"/>
<dbReference type="PaxDb" id="9913-ENSBTAP00000048107"/>
<dbReference type="GeneID" id="525500"/>
<dbReference type="KEGG" id="bta:525500"/>
<dbReference type="CTD" id="242286"/>
<dbReference type="eggNOG" id="KOG1201">
    <property type="taxonomic scope" value="Eukaryota"/>
</dbReference>
<dbReference type="HOGENOM" id="CLU_010194_2_5_1"/>
<dbReference type="InParanoid" id="A5PJJ7"/>
<dbReference type="OrthoDB" id="10253736at2759"/>
<dbReference type="TreeFam" id="TF312837"/>
<dbReference type="Proteomes" id="UP000009136">
    <property type="component" value="Unplaced"/>
</dbReference>
<dbReference type="GO" id="GO:0005811">
    <property type="term" value="C:lipid droplet"/>
    <property type="evidence" value="ECO:0000318"/>
    <property type="project" value="GO_Central"/>
</dbReference>
<dbReference type="GO" id="GO:0016616">
    <property type="term" value="F:oxidoreductase activity, acting on the CH-OH group of donors, NAD or NADP as acceptor"/>
    <property type="evidence" value="ECO:0000318"/>
    <property type="project" value="GO_Central"/>
</dbReference>
<dbReference type="CDD" id="cd05339">
    <property type="entry name" value="17beta-HSDXI-like_SDR_c"/>
    <property type="match status" value="1"/>
</dbReference>
<dbReference type="FunFam" id="3.40.50.720:FF:000202">
    <property type="entry name" value="Short-chain dehydrogenase/reductase family 16C member 6"/>
    <property type="match status" value="1"/>
</dbReference>
<dbReference type="Gene3D" id="3.40.50.720">
    <property type="entry name" value="NAD(P)-binding Rossmann-like Domain"/>
    <property type="match status" value="1"/>
</dbReference>
<dbReference type="InterPro" id="IPR036291">
    <property type="entry name" value="NAD(P)-bd_dom_sf"/>
</dbReference>
<dbReference type="InterPro" id="IPR020904">
    <property type="entry name" value="Sc_DH/Rdtase_CS"/>
</dbReference>
<dbReference type="InterPro" id="IPR002347">
    <property type="entry name" value="SDR_fam"/>
</dbReference>
<dbReference type="PANTHER" id="PTHR24322">
    <property type="entry name" value="PKSB"/>
    <property type="match status" value="1"/>
</dbReference>
<dbReference type="PANTHER" id="PTHR24322:SF341">
    <property type="entry name" value="SHORT-CHAIN DEHYDROGENASE_REDUCTASE FAMILY 16C MEMBER 6"/>
    <property type="match status" value="1"/>
</dbReference>
<dbReference type="Pfam" id="PF00106">
    <property type="entry name" value="adh_short"/>
    <property type="match status" value="1"/>
</dbReference>
<dbReference type="PRINTS" id="PR00081">
    <property type="entry name" value="GDHRDH"/>
</dbReference>
<dbReference type="PRINTS" id="PR00080">
    <property type="entry name" value="SDRFAMILY"/>
</dbReference>
<dbReference type="SUPFAM" id="SSF51735">
    <property type="entry name" value="NAD(P)-binding Rossmann-fold domains"/>
    <property type="match status" value="1"/>
</dbReference>
<dbReference type="PROSITE" id="PS00061">
    <property type="entry name" value="ADH_SHORT"/>
    <property type="match status" value="1"/>
</dbReference>
<evidence type="ECO:0000250" key="1"/>
<evidence type="ECO:0000255" key="2"/>
<evidence type="ECO:0000255" key="3">
    <source>
        <dbReference type="PROSITE-ProRule" id="PRU10001"/>
    </source>
</evidence>
<evidence type="ECO:0000305" key="4"/>
<sequence>MNVLLDTSIFLGKFLYYFLESLYYKIIPKKKKDVTGEIVLITGAASGLGRLLAIKFASLGAILVLWDINEEGNMETCRIIKEERDAKVFAYTCDCSNRQDVYRVADQVKKEVGNVTILINNAGVVTGREFLKTPDHMVERSFLVNVMSHFWTYKAFLPAMLEANHGHLVCISSFAGIVGINELSDYCASKFAAYGFAESLHFELKLLQKSKINTTIVCPYFIKTGMFEGCSTKYPLLLPMLTQEYAAQSILNAILEEQLYLIMPRFSHVALFLKQIISTNMMMTMAEYLGMDISLASFIEREKSGEVQTKTEGKQQ</sequence>
<proteinExistence type="evidence at transcript level"/>
<reference key="1">
    <citation type="submission" date="2007-06" db="EMBL/GenBank/DDBJ databases">
        <authorList>
            <consortium name="NIH - Mammalian Gene Collection (MGC) project"/>
        </authorList>
    </citation>
    <scope>NUCLEOTIDE SEQUENCE [LARGE SCALE MRNA]</scope>
    <source>
        <strain>Hereford</strain>
        <tissue>Fetal skin</tissue>
    </source>
</reference>
<organism>
    <name type="scientific">Bos taurus</name>
    <name type="common">Bovine</name>
    <dbReference type="NCBI Taxonomy" id="9913"/>
    <lineage>
        <taxon>Eukaryota</taxon>
        <taxon>Metazoa</taxon>
        <taxon>Chordata</taxon>
        <taxon>Craniata</taxon>
        <taxon>Vertebrata</taxon>
        <taxon>Euteleostomi</taxon>
        <taxon>Mammalia</taxon>
        <taxon>Eutheria</taxon>
        <taxon>Laurasiatheria</taxon>
        <taxon>Artiodactyla</taxon>
        <taxon>Ruminantia</taxon>
        <taxon>Pecora</taxon>
        <taxon>Bovidae</taxon>
        <taxon>Bovinae</taxon>
        <taxon>Bos</taxon>
    </lineage>
</organism>
<feature type="chain" id="PRO_0000386456" description="Short-chain dehydrogenase/reductase family 16C member 6">
    <location>
        <begin position="1"/>
        <end position="316"/>
    </location>
</feature>
<feature type="active site" description="Proton acceptor" evidence="3">
    <location>
        <position position="186"/>
    </location>
</feature>
<feature type="binding site" evidence="1">
    <location>
        <begin position="40"/>
        <end position="64"/>
    </location>
    <ligand>
        <name>NAD(+)</name>
        <dbReference type="ChEBI" id="CHEBI:57540"/>
    </ligand>
</feature>
<feature type="binding site" evidence="2">
    <location>
        <position position="173"/>
    </location>
    <ligand>
        <name>substrate</name>
    </ligand>
</feature>
<gene>
    <name type="primary">SDR16C6</name>
</gene>
<name>S16C6_BOVIN</name>